<sequence>MLKPLENRVVLRVKEEEEKSMGGIVLTSASQEKPQTAEVIAVGEGKTTNHGTLISPLVKVGDTVIFEKFAGTTVKMDGEEFLILKDSDLLAIVE</sequence>
<protein>
    <recommendedName>
        <fullName evidence="1">Co-chaperonin GroES</fullName>
    </recommendedName>
    <alternativeName>
        <fullName evidence="1">10 kDa chaperonin</fullName>
    </alternativeName>
    <alternativeName>
        <fullName evidence="1">Chaperonin-10</fullName>
        <shortName evidence="1">Cpn10</shortName>
    </alternativeName>
</protein>
<dbReference type="EMBL" id="AY029215">
    <property type="protein sequence ID" value="AAK31638.1"/>
    <property type="molecule type" value="Genomic_DNA"/>
</dbReference>
<dbReference type="EMBL" id="AM406671">
    <property type="protein sequence ID" value="CAL97014.1"/>
    <property type="molecule type" value="Genomic_DNA"/>
</dbReference>
<dbReference type="RefSeq" id="WP_011834459.1">
    <property type="nucleotide sequence ID" value="NC_009004.1"/>
</dbReference>
<dbReference type="SMR" id="Q9AEP8"/>
<dbReference type="STRING" id="416870.llmg_0410"/>
<dbReference type="GeneID" id="61108712"/>
<dbReference type="KEGG" id="llm:llmg_0410"/>
<dbReference type="eggNOG" id="COG0234">
    <property type="taxonomic scope" value="Bacteria"/>
</dbReference>
<dbReference type="HOGENOM" id="CLU_132825_2_1_9"/>
<dbReference type="OrthoDB" id="9806791at2"/>
<dbReference type="PhylomeDB" id="Q9AEP8"/>
<dbReference type="Proteomes" id="UP000000364">
    <property type="component" value="Chromosome"/>
</dbReference>
<dbReference type="GO" id="GO:0005737">
    <property type="term" value="C:cytoplasm"/>
    <property type="evidence" value="ECO:0007669"/>
    <property type="project" value="UniProtKB-SubCell"/>
</dbReference>
<dbReference type="GO" id="GO:0005524">
    <property type="term" value="F:ATP binding"/>
    <property type="evidence" value="ECO:0007669"/>
    <property type="project" value="InterPro"/>
</dbReference>
<dbReference type="GO" id="GO:0046872">
    <property type="term" value="F:metal ion binding"/>
    <property type="evidence" value="ECO:0007669"/>
    <property type="project" value="TreeGrafter"/>
</dbReference>
<dbReference type="GO" id="GO:0044183">
    <property type="term" value="F:protein folding chaperone"/>
    <property type="evidence" value="ECO:0007669"/>
    <property type="project" value="InterPro"/>
</dbReference>
<dbReference type="GO" id="GO:0051087">
    <property type="term" value="F:protein-folding chaperone binding"/>
    <property type="evidence" value="ECO:0007669"/>
    <property type="project" value="TreeGrafter"/>
</dbReference>
<dbReference type="GO" id="GO:0051082">
    <property type="term" value="F:unfolded protein binding"/>
    <property type="evidence" value="ECO:0007669"/>
    <property type="project" value="TreeGrafter"/>
</dbReference>
<dbReference type="GO" id="GO:0051085">
    <property type="term" value="P:chaperone cofactor-dependent protein refolding"/>
    <property type="evidence" value="ECO:0007669"/>
    <property type="project" value="TreeGrafter"/>
</dbReference>
<dbReference type="CDD" id="cd00320">
    <property type="entry name" value="cpn10"/>
    <property type="match status" value="1"/>
</dbReference>
<dbReference type="FunFam" id="2.30.33.40:FF:000001">
    <property type="entry name" value="10 kDa chaperonin"/>
    <property type="match status" value="1"/>
</dbReference>
<dbReference type="Gene3D" id="2.30.33.40">
    <property type="entry name" value="GroES chaperonin"/>
    <property type="match status" value="1"/>
</dbReference>
<dbReference type="HAMAP" id="MF_00580">
    <property type="entry name" value="CH10"/>
    <property type="match status" value="1"/>
</dbReference>
<dbReference type="InterPro" id="IPR020818">
    <property type="entry name" value="Chaperonin_GroES"/>
</dbReference>
<dbReference type="InterPro" id="IPR037124">
    <property type="entry name" value="Chaperonin_GroES_sf"/>
</dbReference>
<dbReference type="InterPro" id="IPR018369">
    <property type="entry name" value="Chaprnonin_Cpn10_CS"/>
</dbReference>
<dbReference type="InterPro" id="IPR011032">
    <property type="entry name" value="GroES-like_sf"/>
</dbReference>
<dbReference type="NCBIfam" id="NF001531">
    <property type="entry name" value="PRK00364.2-2"/>
    <property type="match status" value="1"/>
</dbReference>
<dbReference type="NCBIfam" id="NF001533">
    <property type="entry name" value="PRK00364.2-4"/>
    <property type="match status" value="1"/>
</dbReference>
<dbReference type="NCBIfam" id="NF001534">
    <property type="entry name" value="PRK00364.2-5"/>
    <property type="match status" value="1"/>
</dbReference>
<dbReference type="PANTHER" id="PTHR10772">
    <property type="entry name" value="10 KDA HEAT SHOCK PROTEIN"/>
    <property type="match status" value="1"/>
</dbReference>
<dbReference type="PANTHER" id="PTHR10772:SF58">
    <property type="entry name" value="CO-CHAPERONIN GROES"/>
    <property type="match status" value="1"/>
</dbReference>
<dbReference type="Pfam" id="PF00166">
    <property type="entry name" value="Cpn10"/>
    <property type="match status" value="1"/>
</dbReference>
<dbReference type="PRINTS" id="PR00297">
    <property type="entry name" value="CHAPERONIN10"/>
</dbReference>
<dbReference type="SMART" id="SM00883">
    <property type="entry name" value="Cpn10"/>
    <property type="match status" value="1"/>
</dbReference>
<dbReference type="SUPFAM" id="SSF50129">
    <property type="entry name" value="GroES-like"/>
    <property type="match status" value="1"/>
</dbReference>
<dbReference type="PROSITE" id="PS00681">
    <property type="entry name" value="CHAPERONINS_CPN10"/>
    <property type="match status" value="1"/>
</dbReference>
<evidence type="ECO:0000255" key="1">
    <source>
        <dbReference type="HAMAP-Rule" id="MF_00580"/>
    </source>
</evidence>
<reference key="1">
    <citation type="submission" date="2001-04" db="EMBL/GenBank/DDBJ databases">
        <title>groELS sequence from Lactococcus lactis subsp. cremoris MG1363.</title>
        <authorList>
            <person name="Vogensen F.K."/>
            <person name="Kilstrup M."/>
        </authorList>
    </citation>
    <scope>NUCLEOTIDE SEQUENCE [GENOMIC DNA]</scope>
</reference>
<reference key="2">
    <citation type="journal article" date="2007" name="J. Bacteriol.">
        <title>The complete genome sequence of the lactic acid bacterial paradigm Lactococcus lactis subsp. cremoris MG1363.</title>
        <authorList>
            <person name="Wegmann U."/>
            <person name="O'Connell-Motherway M."/>
            <person name="Zomer A."/>
            <person name="Buist G."/>
            <person name="Shearman C."/>
            <person name="Canchaya C."/>
            <person name="Ventura M."/>
            <person name="Goesmann A."/>
            <person name="Gasson M.J."/>
            <person name="Kuipers O.P."/>
            <person name="van Sinderen D."/>
            <person name="Kok J."/>
        </authorList>
    </citation>
    <scope>NUCLEOTIDE SEQUENCE [LARGE SCALE GENOMIC DNA]</scope>
    <source>
        <strain>MG1363</strain>
    </source>
</reference>
<keyword id="KW-0143">Chaperone</keyword>
<keyword id="KW-0963">Cytoplasm</keyword>
<name>CH10_LACLM</name>
<comment type="function">
    <text evidence="1">Together with the chaperonin GroEL, plays an essential role in assisting protein folding. The GroEL-GroES system forms a nano-cage that allows encapsulation of the non-native substrate proteins and provides a physical environment optimized to promote and accelerate protein folding. GroES binds to the apical surface of the GroEL ring, thereby capping the opening of the GroEL channel.</text>
</comment>
<comment type="subunit">
    <text evidence="1">Heptamer of 7 subunits arranged in a ring. Interacts with the chaperonin GroEL.</text>
</comment>
<comment type="subcellular location">
    <subcellularLocation>
        <location evidence="1">Cytoplasm</location>
    </subcellularLocation>
</comment>
<comment type="similarity">
    <text evidence="1">Belongs to the GroES chaperonin family.</text>
</comment>
<proteinExistence type="inferred from homology"/>
<gene>
    <name evidence="1" type="primary">groES</name>
    <name evidence="1" type="synonym">groS</name>
    <name type="ordered locus">llmg_0410</name>
</gene>
<organism>
    <name type="scientific">Lactococcus lactis subsp. cremoris (strain MG1363)</name>
    <dbReference type="NCBI Taxonomy" id="416870"/>
    <lineage>
        <taxon>Bacteria</taxon>
        <taxon>Bacillati</taxon>
        <taxon>Bacillota</taxon>
        <taxon>Bacilli</taxon>
        <taxon>Lactobacillales</taxon>
        <taxon>Streptococcaceae</taxon>
        <taxon>Lactococcus</taxon>
        <taxon>Lactococcus cremoris subsp. cremoris</taxon>
    </lineage>
</organism>
<feature type="chain" id="PRO_0000174771" description="Co-chaperonin GroES">
    <location>
        <begin position="1"/>
        <end position="94"/>
    </location>
</feature>
<accession>Q9AEP8</accession>
<accession>A2RIB9</accession>